<name>NDHH_PROM0</name>
<accession>A3PAP0</accession>
<organism>
    <name type="scientific">Prochlorococcus marinus (strain MIT 9301)</name>
    <dbReference type="NCBI Taxonomy" id="167546"/>
    <lineage>
        <taxon>Bacteria</taxon>
        <taxon>Bacillati</taxon>
        <taxon>Cyanobacteriota</taxon>
        <taxon>Cyanophyceae</taxon>
        <taxon>Synechococcales</taxon>
        <taxon>Prochlorococcaceae</taxon>
        <taxon>Prochlorococcus</taxon>
    </lineage>
</organism>
<protein>
    <recommendedName>
        <fullName evidence="1">NAD(P)H-quinone oxidoreductase subunit H</fullName>
        <ecNumber evidence="1">7.1.1.-</ecNumber>
    </recommendedName>
    <alternativeName>
        <fullName>NAD(P)H dehydrogenase subunit H</fullName>
    </alternativeName>
    <alternativeName>
        <fullName evidence="1">NADH-plastoquinone oxidoreductase subunit H</fullName>
    </alternativeName>
    <alternativeName>
        <fullName evidence="1">NDH-1 subunit H</fullName>
        <shortName evidence="1">NDH-H</shortName>
    </alternativeName>
</protein>
<keyword id="KW-0472">Membrane</keyword>
<keyword id="KW-0520">NAD</keyword>
<keyword id="KW-0521">NADP</keyword>
<keyword id="KW-0618">Plastoquinone</keyword>
<keyword id="KW-0874">Quinone</keyword>
<keyword id="KW-1185">Reference proteome</keyword>
<keyword id="KW-0793">Thylakoid</keyword>
<keyword id="KW-1278">Translocase</keyword>
<keyword id="KW-0813">Transport</keyword>
<evidence type="ECO:0000255" key="1">
    <source>
        <dbReference type="HAMAP-Rule" id="MF_01358"/>
    </source>
</evidence>
<sequence>MAQLETRTEPMVVNFGPHHPSMHGVLRLVVTLDGENVIDCEPVIGYLHRGMEKIAENRTNVMYVPYVSRMDYAAGMFYEAIVVNAPERLANIPVPKRASYIRVLMLELNRIANHLLWLGPFLADVGAQTPFFYIFREREMIYDLWEAATGQRLINNNFFRIGGVACDLPYGWLEKCIDFCDWFGPKIDEYEKLITNNPIFRKRIEGLGTIQRDQAINWSLSGPMLRASGVSWDLRKVDSYECYDDFDWQIASEKEGDCYARYRVRVEEMRQSLSIIRQACKMIPGGPTENLEAQRMSTEDKKSEIFGIDYQYVAKKVAPTFKIPNGELYTRLESGKGEIGVFIQGNNEVTPWRFKIRAADLNNLQILPHILKGAKIADIMAILGSIDVIMGSVDR</sequence>
<comment type="function">
    <text evidence="1">NDH-1 shuttles electrons from an unknown electron donor, via FMN and iron-sulfur (Fe-S) centers, to quinones in the respiratory and/or the photosynthetic chain. The immediate electron acceptor for the enzyme in this species is believed to be plastoquinone. Couples the redox reaction to proton translocation, and thus conserves the redox energy in a proton gradient. Cyanobacterial NDH-1 also plays a role in inorganic carbon-concentration.</text>
</comment>
<comment type="catalytic activity">
    <reaction evidence="1">
        <text>a plastoquinone + NADH + (n+1) H(+)(in) = a plastoquinol + NAD(+) + n H(+)(out)</text>
        <dbReference type="Rhea" id="RHEA:42608"/>
        <dbReference type="Rhea" id="RHEA-COMP:9561"/>
        <dbReference type="Rhea" id="RHEA-COMP:9562"/>
        <dbReference type="ChEBI" id="CHEBI:15378"/>
        <dbReference type="ChEBI" id="CHEBI:17757"/>
        <dbReference type="ChEBI" id="CHEBI:57540"/>
        <dbReference type="ChEBI" id="CHEBI:57945"/>
        <dbReference type="ChEBI" id="CHEBI:62192"/>
    </reaction>
</comment>
<comment type="catalytic activity">
    <reaction evidence="1">
        <text>a plastoquinone + NADPH + (n+1) H(+)(in) = a plastoquinol + NADP(+) + n H(+)(out)</text>
        <dbReference type="Rhea" id="RHEA:42612"/>
        <dbReference type="Rhea" id="RHEA-COMP:9561"/>
        <dbReference type="Rhea" id="RHEA-COMP:9562"/>
        <dbReference type="ChEBI" id="CHEBI:15378"/>
        <dbReference type="ChEBI" id="CHEBI:17757"/>
        <dbReference type="ChEBI" id="CHEBI:57783"/>
        <dbReference type="ChEBI" id="CHEBI:58349"/>
        <dbReference type="ChEBI" id="CHEBI:62192"/>
    </reaction>
</comment>
<comment type="subunit">
    <text evidence="1">NDH-1 can be composed of about 15 different subunits; different subcomplexes with different compositions have been identified which probably have different functions.</text>
</comment>
<comment type="subcellular location">
    <subcellularLocation>
        <location evidence="1">Cellular thylakoid membrane</location>
        <topology evidence="1">Peripheral membrane protein</topology>
        <orientation evidence="1">Cytoplasmic side</orientation>
    </subcellularLocation>
</comment>
<comment type="similarity">
    <text evidence="1">Belongs to the complex I 49 kDa subunit family.</text>
</comment>
<reference key="1">
    <citation type="journal article" date="2007" name="PLoS Genet.">
        <title>Patterns and implications of gene gain and loss in the evolution of Prochlorococcus.</title>
        <authorList>
            <person name="Kettler G.C."/>
            <person name="Martiny A.C."/>
            <person name="Huang K."/>
            <person name="Zucker J."/>
            <person name="Coleman M.L."/>
            <person name="Rodrigue S."/>
            <person name="Chen F."/>
            <person name="Lapidus A."/>
            <person name="Ferriera S."/>
            <person name="Johnson J."/>
            <person name="Steglich C."/>
            <person name="Church G.M."/>
            <person name="Richardson P."/>
            <person name="Chisholm S.W."/>
        </authorList>
    </citation>
    <scope>NUCLEOTIDE SEQUENCE [LARGE SCALE GENOMIC DNA]</scope>
    <source>
        <strain>MIT 9301</strain>
    </source>
</reference>
<proteinExistence type="inferred from homology"/>
<dbReference type="EC" id="7.1.1.-" evidence="1"/>
<dbReference type="EMBL" id="CP000576">
    <property type="protein sequence ID" value="ABO16815.1"/>
    <property type="molecule type" value="Genomic_DNA"/>
</dbReference>
<dbReference type="RefSeq" id="WP_011862217.1">
    <property type="nucleotide sequence ID" value="NC_009091.1"/>
</dbReference>
<dbReference type="SMR" id="A3PAP0"/>
<dbReference type="STRING" id="167546.P9301_01921"/>
<dbReference type="KEGG" id="pmg:P9301_01921"/>
<dbReference type="eggNOG" id="COG0649">
    <property type="taxonomic scope" value="Bacteria"/>
</dbReference>
<dbReference type="HOGENOM" id="CLU_015134_1_2_3"/>
<dbReference type="OrthoDB" id="9801496at2"/>
<dbReference type="Proteomes" id="UP000001430">
    <property type="component" value="Chromosome"/>
</dbReference>
<dbReference type="GO" id="GO:0031676">
    <property type="term" value="C:plasma membrane-derived thylakoid membrane"/>
    <property type="evidence" value="ECO:0007669"/>
    <property type="project" value="UniProtKB-SubCell"/>
</dbReference>
<dbReference type="GO" id="GO:0051287">
    <property type="term" value="F:NAD binding"/>
    <property type="evidence" value="ECO:0007669"/>
    <property type="project" value="InterPro"/>
</dbReference>
<dbReference type="GO" id="GO:0016655">
    <property type="term" value="F:oxidoreductase activity, acting on NAD(P)H, quinone or similar compound as acceptor"/>
    <property type="evidence" value="ECO:0007669"/>
    <property type="project" value="UniProtKB-UniRule"/>
</dbReference>
<dbReference type="GO" id="GO:0048038">
    <property type="term" value="F:quinone binding"/>
    <property type="evidence" value="ECO:0007669"/>
    <property type="project" value="UniProtKB-KW"/>
</dbReference>
<dbReference type="GO" id="GO:0019684">
    <property type="term" value="P:photosynthesis, light reaction"/>
    <property type="evidence" value="ECO:0007669"/>
    <property type="project" value="UniProtKB-UniRule"/>
</dbReference>
<dbReference type="Gene3D" id="1.10.645.10">
    <property type="entry name" value="Cytochrome-c3 Hydrogenase, chain B"/>
    <property type="match status" value="1"/>
</dbReference>
<dbReference type="HAMAP" id="MF_01358">
    <property type="entry name" value="NDH1_NuoD"/>
    <property type="match status" value="1"/>
</dbReference>
<dbReference type="InterPro" id="IPR001135">
    <property type="entry name" value="NADH_Q_OxRdtase_suD"/>
</dbReference>
<dbReference type="InterPro" id="IPR014029">
    <property type="entry name" value="NADH_UbQ_OxRdtase_49kDa_CS"/>
</dbReference>
<dbReference type="InterPro" id="IPR022885">
    <property type="entry name" value="NDH1_su_D/H"/>
</dbReference>
<dbReference type="InterPro" id="IPR029014">
    <property type="entry name" value="NiFe-Hase_large"/>
</dbReference>
<dbReference type="NCBIfam" id="NF004739">
    <property type="entry name" value="PRK06075.1"/>
    <property type="match status" value="1"/>
</dbReference>
<dbReference type="NCBIfam" id="NF005649">
    <property type="entry name" value="PRK07415.1"/>
    <property type="match status" value="1"/>
</dbReference>
<dbReference type="PANTHER" id="PTHR11993:SF10">
    <property type="entry name" value="NADH DEHYDROGENASE [UBIQUINONE] IRON-SULFUR PROTEIN 2, MITOCHONDRIAL"/>
    <property type="match status" value="1"/>
</dbReference>
<dbReference type="PANTHER" id="PTHR11993">
    <property type="entry name" value="NADH-UBIQUINONE OXIDOREDUCTASE 49 KDA SUBUNIT"/>
    <property type="match status" value="1"/>
</dbReference>
<dbReference type="Pfam" id="PF00346">
    <property type="entry name" value="Complex1_49kDa"/>
    <property type="match status" value="1"/>
</dbReference>
<dbReference type="SUPFAM" id="SSF56762">
    <property type="entry name" value="HydB/Nqo4-like"/>
    <property type="match status" value="1"/>
</dbReference>
<dbReference type="PROSITE" id="PS00535">
    <property type="entry name" value="COMPLEX1_49K"/>
    <property type="match status" value="1"/>
</dbReference>
<feature type="chain" id="PRO_0000371909" description="NAD(P)H-quinone oxidoreductase subunit H">
    <location>
        <begin position="1"/>
        <end position="395"/>
    </location>
</feature>
<gene>
    <name evidence="1" type="primary">ndhH</name>
    <name type="ordered locus">P9301_01921</name>
</gene>